<accession>Q4TTN8</accession>
<keyword id="KW-0037">Angiogenesis</keyword>
<keyword id="KW-0217">Developmental protein</keyword>
<keyword id="KW-0306">Gastrulation</keyword>
<keyword id="KW-0372">Hormone</keyword>
<keyword id="KW-1185">Reference proteome</keyword>
<keyword id="KW-0964">Secreted</keyword>
<keyword id="KW-0732">Signal</keyword>
<gene>
    <name evidence="11" type="primary">apln</name>
</gene>
<protein>
    <recommendedName>
        <fullName>Apelin</fullName>
    </recommendedName>
    <alternativeName>
        <fullName>APJ endogenous ligand</fullName>
    </alternativeName>
</protein>
<proteinExistence type="evidence at protein level"/>
<organism evidence="10">
    <name type="scientific">Danio rerio</name>
    <name type="common">Zebrafish</name>
    <name type="synonym">Brachydanio rerio</name>
    <dbReference type="NCBI Taxonomy" id="7955"/>
    <lineage>
        <taxon>Eukaryota</taxon>
        <taxon>Metazoa</taxon>
        <taxon>Chordata</taxon>
        <taxon>Craniata</taxon>
        <taxon>Vertebrata</taxon>
        <taxon>Euteleostomi</taxon>
        <taxon>Actinopterygii</taxon>
        <taxon>Neopterygii</taxon>
        <taxon>Teleostei</taxon>
        <taxon>Ostariophysi</taxon>
        <taxon>Cypriniformes</taxon>
        <taxon>Danionidae</taxon>
        <taxon>Danioninae</taxon>
        <taxon>Danio</taxon>
    </lineage>
</organism>
<dbReference type="EMBL" id="DQ062434">
    <property type="protein sequence ID" value="AAY46798.2"/>
    <property type="molecule type" value="mRNA"/>
</dbReference>
<dbReference type="EMBL" id="AL929104">
    <property type="status" value="NOT_ANNOTATED_CDS"/>
    <property type="molecule type" value="Genomic_DNA"/>
</dbReference>
<dbReference type="RefSeq" id="NP_001159596.1">
    <property type="nucleotide sequence ID" value="NM_001166124.3"/>
</dbReference>
<dbReference type="FunCoup" id="Q4TTN8">
    <property type="interactions" value="322"/>
</dbReference>
<dbReference type="STRING" id="7955.ENSDARP00000069796"/>
<dbReference type="PaxDb" id="7955-ENSDARP00000069796"/>
<dbReference type="Ensembl" id="ENSDART00000075312">
    <property type="protein sequence ID" value="ENSDARP00000069796"/>
    <property type="gene ID" value="ENSDARG00000053279"/>
</dbReference>
<dbReference type="Ensembl" id="ENSDART00000132488">
    <property type="protein sequence ID" value="ENSDARP00000116403"/>
    <property type="gene ID" value="ENSDARG00000053279"/>
</dbReference>
<dbReference type="GeneID" id="798375"/>
<dbReference type="KEGG" id="dre:798375"/>
<dbReference type="AGR" id="ZFIN:ZDB-GENE-070521-8"/>
<dbReference type="CTD" id="8862"/>
<dbReference type="ZFIN" id="ZDB-GENE-070521-8">
    <property type="gene designation" value="apln"/>
</dbReference>
<dbReference type="eggNOG" id="ENOG502S5ZZ">
    <property type="taxonomic scope" value="Eukaryota"/>
</dbReference>
<dbReference type="HOGENOM" id="CLU_198461_0_0_1"/>
<dbReference type="InParanoid" id="Q4TTN8"/>
<dbReference type="OMA" id="VCPPGPM"/>
<dbReference type="OrthoDB" id="9892041at2759"/>
<dbReference type="TreeFam" id="TF339660"/>
<dbReference type="Reactome" id="R-DRE-375276">
    <property type="pathway name" value="Peptide ligand-binding receptors"/>
</dbReference>
<dbReference type="Reactome" id="R-DRE-418594">
    <property type="pathway name" value="G alpha (i) signalling events"/>
</dbReference>
<dbReference type="PRO" id="PR:Q4TTN8"/>
<dbReference type="Proteomes" id="UP000000437">
    <property type="component" value="Chromosome 14"/>
</dbReference>
<dbReference type="Bgee" id="ENSDARG00000053279">
    <property type="expression patterns" value="Expressed in spleen and 30 other cell types or tissues"/>
</dbReference>
<dbReference type="GO" id="GO:0005615">
    <property type="term" value="C:extracellular space"/>
    <property type="evidence" value="ECO:0000250"/>
    <property type="project" value="UniProtKB"/>
</dbReference>
<dbReference type="GO" id="GO:0031704">
    <property type="term" value="F:apelin receptor binding"/>
    <property type="evidence" value="ECO:0000314"/>
    <property type="project" value="ZFIN"/>
</dbReference>
<dbReference type="GO" id="GO:0005179">
    <property type="term" value="F:hormone activity"/>
    <property type="evidence" value="ECO:0000250"/>
    <property type="project" value="UniProtKB"/>
</dbReference>
<dbReference type="GO" id="GO:0048018">
    <property type="term" value="F:receptor ligand activity"/>
    <property type="evidence" value="ECO:0000304"/>
    <property type="project" value="ZFIN"/>
</dbReference>
<dbReference type="GO" id="GO:0035479">
    <property type="term" value="P:angioblast cell migration from lateral mesoderm to midline"/>
    <property type="evidence" value="ECO:0000316"/>
    <property type="project" value="ZFIN"/>
</dbReference>
<dbReference type="GO" id="GO:0060183">
    <property type="term" value="P:apelin receptor signaling pathway"/>
    <property type="evidence" value="ECO:0000250"/>
    <property type="project" value="UniProtKB"/>
</dbReference>
<dbReference type="GO" id="GO:0042074">
    <property type="term" value="P:cell migration involved in gastrulation"/>
    <property type="evidence" value="ECO:0000314"/>
    <property type="project" value="ZFIN"/>
</dbReference>
<dbReference type="GO" id="GO:0090134">
    <property type="term" value="P:cell migration involved in mesendoderm migration"/>
    <property type="evidence" value="ECO:0000316"/>
    <property type="project" value="ZFIN"/>
</dbReference>
<dbReference type="GO" id="GO:0060976">
    <property type="term" value="P:coronary vasculature development"/>
    <property type="evidence" value="ECO:0000250"/>
    <property type="project" value="UniProtKB"/>
</dbReference>
<dbReference type="GO" id="GO:0061371">
    <property type="term" value="P:determination of heart left/right asymmetry"/>
    <property type="evidence" value="ECO:0000315"/>
    <property type="project" value="ZFIN"/>
</dbReference>
<dbReference type="GO" id="GO:0071910">
    <property type="term" value="P:determination of liver left/right asymmetry"/>
    <property type="evidence" value="ECO:0000315"/>
    <property type="project" value="ZFIN"/>
</dbReference>
<dbReference type="GO" id="GO:0042756">
    <property type="term" value="P:drinking behavior"/>
    <property type="evidence" value="ECO:0000250"/>
    <property type="project" value="UniProtKB"/>
</dbReference>
<dbReference type="GO" id="GO:0007507">
    <property type="term" value="P:heart development"/>
    <property type="evidence" value="ECO:0000315"/>
    <property type="project" value="ZFIN"/>
</dbReference>
<dbReference type="GO" id="GO:0001945">
    <property type="term" value="P:lymph vessel development"/>
    <property type="evidence" value="ECO:0000315"/>
    <property type="project" value="ZFIN"/>
</dbReference>
<dbReference type="GO" id="GO:0008078">
    <property type="term" value="P:mesodermal cell migration"/>
    <property type="evidence" value="ECO:0000315"/>
    <property type="project" value="ZFIN"/>
</dbReference>
<dbReference type="GO" id="GO:0045776">
    <property type="term" value="P:negative regulation of blood pressure"/>
    <property type="evidence" value="ECO:0000250"/>
    <property type="project" value="UniProtKB"/>
</dbReference>
<dbReference type="GO" id="GO:0045823">
    <property type="term" value="P:positive regulation of heart contraction"/>
    <property type="evidence" value="ECO:0000250"/>
    <property type="project" value="UniProtKB"/>
</dbReference>
<dbReference type="GO" id="GO:0001666">
    <property type="term" value="P:response to hypoxia"/>
    <property type="evidence" value="ECO:0000314"/>
    <property type="project" value="ZFIN"/>
</dbReference>
<dbReference type="GO" id="GO:0002040">
    <property type="term" value="P:sprouting angiogenesis"/>
    <property type="evidence" value="ECO:0000316"/>
    <property type="project" value="ZFIN"/>
</dbReference>
<dbReference type="InterPro" id="IPR026155">
    <property type="entry name" value="Apelin"/>
</dbReference>
<dbReference type="PANTHER" id="PTHR15953">
    <property type="entry name" value="APELIN"/>
    <property type="match status" value="1"/>
</dbReference>
<dbReference type="PANTHER" id="PTHR15953:SF0">
    <property type="entry name" value="APELIN"/>
    <property type="match status" value="1"/>
</dbReference>
<dbReference type="Pfam" id="PF15360">
    <property type="entry name" value="Apelin"/>
    <property type="match status" value="1"/>
</dbReference>
<reference key="1">
    <citation type="journal article" date="2007" name="Dev. Cell">
        <title>Apelin and its receptor control heart field formation during zebrafish gastrulation.</title>
        <authorList>
            <person name="Zeng X.-X.I."/>
            <person name="Wilm T.P."/>
            <person name="Sepich D.S."/>
            <person name="Solnica-Krezel L."/>
        </authorList>
    </citation>
    <scope>NUCLEOTIDE SEQUENCE [MRNA]</scope>
    <scope>FUNCTION</scope>
    <scope>DEVELOPMENTAL STAGE</scope>
    <scope>DISRUPTION PHENOTYPE</scope>
</reference>
<reference key="2">
    <citation type="journal article" date="2013" name="Nature">
        <title>The zebrafish reference genome sequence and its relationship to the human genome.</title>
        <authorList>
            <person name="Howe K."/>
            <person name="Clark M.D."/>
            <person name="Torroja C.F."/>
            <person name="Torrance J."/>
            <person name="Berthelot C."/>
            <person name="Muffato M."/>
            <person name="Collins J.E."/>
            <person name="Humphray S."/>
            <person name="McLaren K."/>
            <person name="Matthews L."/>
            <person name="McLaren S."/>
            <person name="Sealy I."/>
            <person name="Caccamo M."/>
            <person name="Churcher C."/>
            <person name="Scott C."/>
            <person name="Barrett J.C."/>
            <person name="Koch R."/>
            <person name="Rauch G.J."/>
            <person name="White S."/>
            <person name="Chow W."/>
            <person name="Kilian B."/>
            <person name="Quintais L.T."/>
            <person name="Guerra-Assuncao J.A."/>
            <person name="Zhou Y."/>
            <person name="Gu Y."/>
            <person name="Yen J."/>
            <person name="Vogel J.H."/>
            <person name="Eyre T."/>
            <person name="Redmond S."/>
            <person name="Banerjee R."/>
            <person name="Chi J."/>
            <person name="Fu B."/>
            <person name="Langley E."/>
            <person name="Maguire S.F."/>
            <person name="Laird G.K."/>
            <person name="Lloyd D."/>
            <person name="Kenyon E."/>
            <person name="Donaldson S."/>
            <person name="Sehra H."/>
            <person name="Almeida-King J."/>
            <person name="Loveland J."/>
            <person name="Trevanion S."/>
            <person name="Jones M."/>
            <person name="Quail M."/>
            <person name="Willey D."/>
            <person name="Hunt A."/>
            <person name="Burton J."/>
            <person name="Sims S."/>
            <person name="McLay K."/>
            <person name="Plumb B."/>
            <person name="Davis J."/>
            <person name="Clee C."/>
            <person name="Oliver K."/>
            <person name="Clark R."/>
            <person name="Riddle C."/>
            <person name="Elliot D."/>
            <person name="Threadgold G."/>
            <person name="Harden G."/>
            <person name="Ware D."/>
            <person name="Begum S."/>
            <person name="Mortimore B."/>
            <person name="Kerry G."/>
            <person name="Heath P."/>
            <person name="Phillimore B."/>
            <person name="Tracey A."/>
            <person name="Corby N."/>
            <person name="Dunn M."/>
            <person name="Johnson C."/>
            <person name="Wood J."/>
            <person name="Clark S."/>
            <person name="Pelan S."/>
            <person name="Griffiths G."/>
            <person name="Smith M."/>
            <person name="Glithero R."/>
            <person name="Howden P."/>
            <person name="Barker N."/>
            <person name="Lloyd C."/>
            <person name="Stevens C."/>
            <person name="Harley J."/>
            <person name="Holt K."/>
            <person name="Panagiotidis G."/>
            <person name="Lovell J."/>
            <person name="Beasley H."/>
            <person name="Henderson C."/>
            <person name="Gordon D."/>
            <person name="Auger K."/>
            <person name="Wright D."/>
            <person name="Collins J."/>
            <person name="Raisen C."/>
            <person name="Dyer L."/>
            <person name="Leung K."/>
            <person name="Robertson L."/>
            <person name="Ambridge K."/>
            <person name="Leongamornlert D."/>
            <person name="McGuire S."/>
            <person name="Gilderthorp R."/>
            <person name="Griffiths C."/>
            <person name="Manthravadi D."/>
            <person name="Nichol S."/>
            <person name="Barker G."/>
            <person name="Whitehead S."/>
            <person name="Kay M."/>
            <person name="Brown J."/>
            <person name="Murnane C."/>
            <person name="Gray E."/>
            <person name="Humphries M."/>
            <person name="Sycamore N."/>
            <person name="Barker D."/>
            <person name="Saunders D."/>
            <person name="Wallis J."/>
            <person name="Babbage A."/>
            <person name="Hammond S."/>
            <person name="Mashreghi-Mohammadi M."/>
            <person name="Barr L."/>
            <person name="Martin S."/>
            <person name="Wray P."/>
            <person name="Ellington A."/>
            <person name="Matthews N."/>
            <person name="Ellwood M."/>
            <person name="Woodmansey R."/>
            <person name="Clark G."/>
            <person name="Cooper J."/>
            <person name="Tromans A."/>
            <person name="Grafham D."/>
            <person name="Skuce C."/>
            <person name="Pandian R."/>
            <person name="Andrews R."/>
            <person name="Harrison E."/>
            <person name="Kimberley A."/>
            <person name="Garnett J."/>
            <person name="Fosker N."/>
            <person name="Hall R."/>
            <person name="Garner P."/>
            <person name="Kelly D."/>
            <person name="Bird C."/>
            <person name="Palmer S."/>
            <person name="Gehring I."/>
            <person name="Berger A."/>
            <person name="Dooley C.M."/>
            <person name="Ersan-Urun Z."/>
            <person name="Eser C."/>
            <person name="Geiger H."/>
            <person name="Geisler M."/>
            <person name="Karotki L."/>
            <person name="Kirn A."/>
            <person name="Konantz J."/>
            <person name="Konantz M."/>
            <person name="Oberlander M."/>
            <person name="Rudolph-Geiger S."/>
            <person name="Teucke M."/>
            <person name="Lanz C."/>
            <person name="Raddatz G."/>
            <person name="Osoegawa K."/>
            <person name="Zhu B."/>
            <person name="Rapp A."/>
            <person name="Widaa S."/>
            <person name="Langford C."/>
            <person name="Yang F."/>
            <person name="Schuster S.C."/>
            <person name="Carter N.P."/>
            <person name="Harrow J."/>
            <person name="Ning Z."/>
            <person name="Herrero J."/>
            <person name="Searle S.M."/>
            <person name="Enright A."/>
            <person name="Geisler R."/>
            <person name="Plasterk R.H."/>
            <person name="Lee C."/>
            <person name="Westerfield M."/>
            <person name="de Jong P.J."/>
            <person name="Zon L.I."/>
            <person name="Postlethwait J.H."/>
            <person name="Nusslein-Volhard C."/>
            <person name="Hubbard T.J."/>
            <person name="Roest Crollius H."/>
            <person name="Rogers J."/>
            <person name="Stemple D.L."/>
        </authorList>
    </citation>
    <scope>NUCLEOTIDE SEQUENCE [LARGE SCALE GENOMIC DNA]</scope>
    <source>
        <strain>Tuebingen</strain>
    </source>
</reference>
<reference key="3">
    <citation type="journal article" date="2014" name="Science">
        <title>Toddler: an embryonic signal that promotes cell movement via apelin receptors.</title>
        <authorList>
            <person name="Pauli A."/>
            <person name="Norris M.L."/>
            <person name="Valen E."/>
            <person name="Chew G.L."/>
            <person name="Gagnon J.A."/>
            <person name="Zimmerman S."/>
            <person name="Mitchell A."/>
            <person name="Ma J."/>
            <person name="Dubrulle J."/>
            <person name="Reyon D."/>
            <person name="Tsai S.Q."/>
            <person name="Joung J.K."/>
            <person name="Saghatelian A."/>
            <person name="Schier A.F."/>
        </authorList>
    </citation>
    <scope>DEVELOPMENTAL STAGE</scope>
</reference>
<reference key="4">
    <citation type="journal article" date="2015" name="Elife">
        <title>The hormonal peptide Elabela guides angioblasts to the midline during vasculogenesis.</title>
        <authorList>
            <person name="Helker C.S."/>
            <person name="Schuermann A."/>
            <person name="Pollmann C."/>
            <person name="Chng S.C."/>
            <person name="Kiefer F."/>
            <person name="Reversade B."/>
            <person name="Herzog W."/>
        </authorList>
    </citation>
    <scope>DISRUPTION PHENOTYPE</scope>
</reference>
<sequence>MNVKILTLVIVLVVSLLCSASAGPMASTEHSKEIEEVGSMRTPLRQNPARAGRSQRPAGWRRRRPRPRLSHKGPMPF</sequence>
<comment type="function">
    <text evidence="1 2 4 7">Peptide hormone that functions as endogenous ligand for the G-protein-coupled apelin receptor (aplnra and/or aplnrb), that plays a role in cadiovascular homeostasis (By similarity). Functions as a balanced agonist activating both G(i) protein pathway and beta-arrestin pathway of APLNR (By similarity). Downstream G proteins activation, apelin can inhibit cAMP production and activate key intracellular effectors such as ERKs. On the other hand, APLNR activation induces beta-arrestin recruitment to the membrane leading to desensitization and internalization of the receptor. Apelin blunts cardiac hypertrophic induction from APLNR on response to pathological stimuli, but also induces myocardial hypertrophy under normal conditions (By similarity). Involved in the regulation of cardiac precursor cell movements during gastrulation and heart morphogenesis (PubMed:17336905). Plays a role in early coronary blood vessels formation (By similarity). Mediates myocardial contractility in an ERK1/2-dependent manner (By similarity). May also have a role in the central control of body fluid homeostasis (By similarity).</text>
</comment>
<comment type="subcellular location">
    <subcellularLocation>
        <location evidence="3">Secreted</location>
    </subcellularLocation>
    <subcellularLocation>
        <location evidence="3">Secreted</location>
        <location evidence="3">Extracellular space</location>
    </subcellularLocation>
</comment>
<comment type="developmental stage">
    <text>Expressed at the end of gastrulation (at protein level) (PubMed:24407481). Expressed in the embryo from 7 to 48 hours post-fertilization (hpf) (PubMed:17336905). Expressed in the axial mesoderm and its later derivative, the notochord at 11.5 hpf (PubMed:17336905). Expressed in the forming head and heart and in the posterior notochord at 18 hpf (PubMed:17336905).</text>
</comment>
<comment type="disruption phenotype">
    <text evidence="7 8">Morpholino knockdown of the protein show impaired gastrulation and heart formation (PubMed:17336905). Embryos display reduced migration of anterior lateral plate mesoderm (LPM) cells and cardiac progenitor cells (angioblasts) toward the midline during late gastrulation (PubMed:17336905, PubMed:26017639). Embryos show altered cardiac gene expression (PubMed:17336905). Embryos with CRISPR-induced apelin and apela null mutations show a strong decrease in the angioblast migration to the embryonic midline during late gastrulation (PubMed:26017639).</text>
</comment>
<comment type="similarity">
    <text evidence="9">Belongs to the apelin family.</text>
</comment>
<name>APEL_DANRE</name>
<feature type="signal peptide" evidence="5">
    <location>
        <begin position="1"/>
        <end position="22"/>
    </location>
</feature>
<feature type="chain" id="PRO_5011209528" description="Apelin" evidence="5">
    <location>
        <begin position="23"/>
        <end position="77"/>
    </location>
</feature>
<feature type="region of interest" description="Disordered" evidence="6">
    <location>
        <begin position="21"/>
        <end position="77"/>
    </location>
</feature>
<feature type="compositionally biased region" description="Basic residues" evidence="6">
    <location>
        <begin position="59"/>
        <end position="71"/>
    </location>
</feature>
<feature type="site" description="Important for the balance between G(i) and beta-arrestin pathways induced by apelin-APLNR system" evidence="4">
    <location>
        <position position="75"/>
    </location>
</feature>
<feature type="site" description="Important for the balance between G(i) and beta-arrestin pathways induced by apelin-APLNR system" evidence="4">
    <location>
        <position position="77"/>
    </location>
</feature>
<evidence type="ECO:0000250" key="1">
    <source>
        <dbReference type="UniProtKB" id="Q9R0R3"/>
    </source>
</evidence>
<evidence type="ECO:0000250" key="2">
    <source>
        <dbReference type="UniProtKB" id="Q9R0R4"/>
    </source>
</evidence>
<evidence type="ECO:0000250" key="3">
    <source>
        <dbReference type="UniProtKB" id="Q9TUI9"/>
    </source>
</evidence>
<evidence type="ECO:0000250" key="4">
    <source>
        <dbReference type="UniProtKB" id="Q9ULZ1"/>
    </source>
</evidence>
<evidence type="ECO:0000255" key="5"/>
<evidence type="ECO:0000256" key="6">
    <source>
        <dbReference type="SAM" id="MobiDB-lite"/>
    </source>
</evidence>
<evidence type="ECO:0000269" key="7">
    <source>
    </source>
</evidence>
<evidence type="ECO:0000269" key="8">
    <source>
    </source>
</evidence>
<evidence type="ECO:0000305" key="9"/>
<evidence type="ECO:0000312" key="10">
    <source>
        <dbReference type="EMBL" id="AAY46798.2"/>
    </source>
</evidence>
<evidence type="ECO:0000312" key="11">
    <source>
        <dbReference type="ZFIN" id="ZDB-GENE-070521-8"/>
    </source>
</evidence>